<reference key="1">
    <citation type="submission" date="2007-03" db="EMBL/GenBank/DDBJ databases">
        <title>Genome sequence of Rhodospirillum centenum.</title>
        <authorList>
            <person name="Touchman J.W."/>
            <person name="Bauer C."/>
            <person name="Blankenship R.E."/>
        </authorList>
    </citation>
    <scope>NUCLEOTIDE SEQUENCE [LARGE SCALE GENOMIC DNA]</scope>
    <source>
        <strain>ATCC 51521 / SW</strain>
    </source>
</reference>
<protein>
    <recommendedName>
        <fullName evidence="1">Potassium-transporting ATPase KdpC subunit</fullName>
    </recommendedName>
    <alternativeName>
        <fullName evidence="1">ATP phosphohydrolase [potassium-transporting] C chain</fullName>
    </alternativeName>
    <alternativeName>
        <fullName evidence="1">Potassium-binding and translocating subunit C</fullName>
    </alternativeName>
    <alternativeName>
        <fullName evidence="1">Potassium-translocating ATPase C chain</fullName>
    </alternativeName>
</protein>
<proteinExistence type="inferred from homology"/>
<keyword id="KW-0067">ATP-binding</keyword>
<keyword id="KW-0997">Cell inner membrane</keyword>
<keyword id="KW-1003">Cell membrane</keyword>
<keyword id="KW-0406">Ion transport</keyword>
<keyword id="KW-0472">Membrane</keyword>
<keyword id="KW-0547">Nucleotide-binding</keyword>
<keyword id="KW-0630">Potassium</keyword>
<keyword id="KW-0633">Potassium transport</keyword>
<keyword id="KW-1185">Reference proteome</keyword>
<keyword id="KW-0812">Transmembrane</keyword>
<keyword id="KW-1133">Transmembrane helix</keyword>
<keyword id="KW-0813">Transport</keyword>
<feature type="chain" id="PRO_1000114735" description="Potassium-transporting ATPase KdpC subunit">
    <location>
        <begin position="1"/>
        <end position="209"/>
    </location>
</feature>
<feature type="transmembrane region" description="Helical" evidence="1">
    <location>
        <begin position="11"/>
        <end position="31"/>
    </location>
</feature>
<feature type="region of interest" description="Disordered" evidence="2">
    <location>
        <begin position="188"/>
        <end position="209"/>
    </location>
</feature>
<feature type="compositionally biased region" description="Basic and acidic residues" evidence="2">
    <location>
        <begin position="197"/>
        <end position="209"/>
    </location>
</feature>
<dbReference type="EMBL" id="CP000613">
    <property type="protein sequence ID" value="ACI97873.1"/>
    <property type="molecule type" value="Genomic_DNA"/>
</dbReference>
<dbReference type="RefSeq" id="WP_012565665.1">
    <property type="nucleotide sequence ID" value="NC_011420.2"/>
</dbReference>
<dbReference type="SMR" id="B6IQY7"/>
<dbReference type="STRING" id="414684.RC1_0434"/>
<dbReference type="KEGG" id="rce:RC1_0434"/>
<dbReference type="eggNOG" id="COG2156">
    <property type="taxonomic scope" value="Bacteria"/>
</dbReference>
<dbReference type="HOGENOM" id="CLU_077094_2_0_5"/>
<dbReference type="OrthoDB" id="9788285at2"/>
<dbReference type="Proteomes" id="UP000001591">
    <property type="component" value="Chromosome"/>
</dbReference>
<dbReference type="GO" id="GO:0005886">
    <property type="term" value="C:plasma membrane"/>
    <property type="evidence" value="ECO:0007669"/>
    <property type="project" value="UniProtKB-SubCell"/>
</dbReference>
<dbReference type="GO" id="GO:0005524">
    <property type="term" value="F:ATP binding"/>
    <property type="evidence" value="ECO:0007669"/>
    <property type="project" value="UniProtKB-UniRule"/>
</dbReference>
<dbReference type="GO" id="GO:0008556">
    <property type="term" value="F:P-type potassium transmembrane transporter activity"/>
    <property type="evidence" value="ECO:0007669"/>
    <property type="project" value="InterPro"/>
</dbReference>
<dbReference type="HAMAP" id="MF_00276">
    <property type="entry name" value="KdpC"/>
    <property type="match status" value="1"/>
</dbReference>
<dbReference type="InterPro" id="IPR003820">
    <property type="entry name" value="KdpC"/>
</dbReference>
<dbReference type="NCBIfam" id="TIGR00681">
    <property type="entry name" value="kdpC"/>
    <property type="match status" value="1"/>
</dbReference>
<dbReference type="NCBIfam" id="NF001454">
    <property type="entry name" value="PRK00315.1"/>
    <property type="match status" value="1"/>
</dbReference>
<dbReference type="PANTHER" id="PTHR30042">
    <property type="entry name" value="POTASSIUM-TRANSPORTING ATPASE C CHAIN"/>
    <property type="match status" value="1"/>
</dbReference>
<dbReference type="PANTHER" id="PTHR30042:SF2">
    <property type="entry name" value="POTASSIUM-TRANSPORTING ATPASE KDPC SUBUNIT"/>
    <property type="match status" value="1"/>
</dbReference>
<dbReference type="Pfam" id="PF02669">
    <property type="entry name" value="KdpC"/>
    <property type="match status" value="1"/>
</dbReference>
<dbReference type="PIRSF" id="PIRSF001296">
    <property type="entry name" value="K_ATPase_KdpC"/>
    <property type="match status" value="1"/>
</dbReference>
<organism>
    <name type="scientific">Rhodospirillum centenum (strain ATCC 51521 / SW)</name>
    <dbReference type="NCBI Taxonomy" id="414684"/>
    <lineage>
        <taxon>Bacteria</taxon>
        <taxon>Pseudomonadati</taxon>
        <taxon>Pseudomonadota</taxon>
        <taxon>Alphaproteobacteria</taxon>
        <taxon>Rhodospirillales</taxon>
        <taxon>Rhodospirillaceae</taxon>
        <taxon>Rhodospirillum</taxon>
    </lineage>
</organism>
<accession>B6IQY7</accession>
<sequence>MLTHLRPALTMILALTVLTGLAYPLAVTAVARLAFPEQAAGSLIHRADGTVLGSALIGQTFTRPEYFWSRPSAAGDGYDAANSSGTNLGPSNTALVAAVQARVEALKAANPDAVGPVPVDLVTASASGLDPHISPAAALWQAPRVAAARGLETGRVVELIRQATEGRVFGFLGEPSVNVLKLNLALDAQAPTPRQPEPGHPEPGRPEVR</sequence>
<name>KDPC_RHOCS</name>
<evidence type="ECO:0000255" key="1">
    <source>
        <dbReference type="HAMAP-Rule" id="MF_00276"/>
    </source>
</evidence>
<evidence type="ECO:0000256" key="2">
    <source>
        <dbReference type="SAM" id="MobiDB-lite"/>
    </source>
</evidence>
<gene>
    <name evidence="1" type="primary">kdpC</name>
    <name type="ordered locus">RC1_0434</name>
</gene>
<comment type="function">
    <text evidence="1">Part of the high-affinity ATP-driven potassium transport (or Kdp) system, which catalyzes the hydrolysis of ATP coupled with the electrogenic transport of potassium into the cytoplasm. This subunit acts as a catalytic chaperone that increases the ATP-binding affinity of the ATP-hydrolyzing subunit KdpB by the formation of a transient KdpB/KdpC/ATP ternary complex.</text>
</comment>
<comment type="subunit">
    <text evidence="1">The system is composed of three essential subunits: KdpA, KdpB and KdpC.</text>
</comment>
<comment type="subcellular location">
    <subcellularLocation>
        <location evidence="1">Cell inner membrane</location>
        <topology evidence="1">Single-pass membrane protein</topology>
    </subcellularLocation>
</comment>
<comment type="similarity">
    <text evidence="1">Belongs to the KdpC family.</text>
</comment>